<proteinExistence type="inferred from homology"/>
<reference key="1">
    <citation type="journal article" date="2007" name="J. Bacteriol.">
        <title>Genome-wide transcriptional changes in Streptococcus gordonii in response to competence signaling peptide.</title>
        <authorList>
            <person name="Vickerman M.M."/>
            <person name="Iobst S."/>
            <person name="Jesionowski A.M."/>
            <person name="Gill S.R."/>
        </authorList>
    </citation>
    <scope>NUCLEOTIDE SEQUENCE [LARGE SCALE GENOMIC DNA]</scope>
    <source>
        <strain>Challis / ATCC 35105 / BCRC 15272 / CH1 / DL1 / V288</strain>
    </source>
</reference>
<dbReference type="EMBL" id="CP000725">
    <property type="protein sequence ID" value="ABV10066.1"/>
    <property type="molecule type" value="Genomic_DNA"/>
</dbReference>
<dbReference type="RefSeq" id="WP_012131019.1">
    <property type="nucleotide sequence ID" value="NC_009785.1"/>
</dbReference>
<dbReference type="SMR" id="A8AZT8"/>
<dbReference type="STRING" id="467705.SGO_2050"/>
<dbReference type="KEGG" id="sgo:SGO_2050"/>
<dbReference type="eggNOG" id="COG0632">
    <property type="taxonomic scope" value="Bacteria"/>
</dbReference>
<dbReference type="HOGENOM" id="CLU_087936_1_0_9"/>
<dbReference type="Proteomes" id="UP000001131">
    <property type="component" value="Chromosome"/>
</dbReference>
<dbReference type="GO" id="GO:0005737">
    <property type="term" value="C:cytoplasm"/>
    <property type="evidence" value="ECO:0007669"/>
    <property type="project" value="UniProtKB-SubCell"/>
</dbReference>
<dbReference type="GO" id="GO:0009379">
    <property type="term" value="C:Holliday junction helicase complex"/>
    <property type="evidence" value="ECO:0007669"/>
    <property type="project" value="InterPro"/>
</dbReference>
<dbReference type="GO" id="GO:0048476">
    <property type="term" value="C:Holliday junction resolvase complex"/>
    <property type="evidence" value="ECO:0007669"/>
    <property type="project" value="UniProtKB-UniRule"/>
</dbReference>
<dbReference type="GO" id="GO:0005524">
    <property type="term" value="F:ATP binding"/>
    <property type="evidence" value="ECO:0007669"/>
    <property type="project" value="InterPro"/>
</dbReference>
<dbReference type="GO" id="GO:0000400">
    <property type="term" value="F:four-way junction DNA binding"/>
    <property type="evidence" value="ECO:0007669"/>
    <property type="project" value="UniProtKB-UniRule"/>
</dbReference>
<dbReference type="GO" id="GO:0009378">
    <property type="term" value="F:four-way junction helicase activity"/>
    <property type="evidence" value="ECO:0007669"/>
    <property type="project" value="InterPro"/>
</dbReference>
<dbReference type="GO" id="GO:0006310">
    <property type="term" value="P:DNA recombination"/>
    <property type="evidence" value="ECO:0007669"/>
    <property type="project" value="UniProtKB-UniRule"/>
</dbReference>
<dbReference type="GO" id="GO:0006281">
    <property type="term" value="P:DNA repair"/>
    <property type="evidence" value="ECO:0007669"/>
    <property type="project" value="UniProtKB-UniRule"/>
</dbReference>
<dbReference type="CDD" id="cd14332">
    <property type="entry name" value="UBA_RuvA_C"/>
    <property type="match status" value="1"/>
</dbReference>
<dbReference type="Gene3D" id="1.10.150.20">
    <property type="entry name" value="5' to 3' exonuclease, C-terminal subdomain"/>
    <property type="match status" value="1"/>
</dbReference>
<dbReference type="Gene3D" id="1.10.8.10">
    <property type="entry name" value="DNA helicase RuvA subunit, C-terminal domain"/>
    <property type="match status" value="1"/>
</dbReference>
<dbReference type="Gene3D" id="2.40.50.140">
    <property type="entry name" value="Nucleic acid-binding proteins"/>
    <property type="match status" value="1"/>
</dbReference>
<dbReference type="HAMAP" id="MF_00031">
    <property type="entry name" value="DNA_HJ_migration_RuvA"/>
    <property type="match status" value="1"/>
</dbReference>
<dbReference type="InterPro" id="IPR013849">
    <property type="entry name" value="DNA_helicase_Holl-junc_RuvA_I"/>
</dbReference>
<dbReference type="InterPro" id="IPR003583">
    <property type="entry name" value="Hlx-hairpin-Hlx_DNA-bd_motif"/>
</dbReference>
<dbReference type="InterPro" id="IPR012340">
    <property type="entry name" value="NA-bd_OB-fold"/>
</dbReference>
<dbReference type="InterPro" id="IPR000085">
    <property type="entry name" value="RuvA"/>
</dbReference>
<dbReference type="InterPro" id="IPR010994">
    <property type="entry name" value="RuvA_2-like"/>
</dbReference>
<dbReference type="InterPro" id="IPR011114">
    <property type="entry name" value="RuvA_C"/>
</dbReference>
<dbReference type="InterPro" id="IPR036267">
    <property type="entry name" value="RuvA_C_sf"/>
</dbReference>
<dbReference type="NCBIfam" id="TIGR00084">
    <property type="entry name" value="ruvA"/>
    <property type="match status" value="1"/>
</dbReference>
<dbReference type="Pfam" id="PF14520">
    <property type="entry name" value="HHH_5"/>
    <property type="match status" value="1"/>
</dbReference>
<dbReference type="Pfam" id="PF07499">
    <property type="entry name" value="RuvA_C"/>
    <property type="match status" value="1"/>
</dbReference>
<dbReference type="Pfam" id="PF01330">
    <property type="entry name" value="RuvA_N"/>
    <property type="match status" value="1"/>
</dbReference>
<dbReference type="SMART" id="SM00278">
    <property type="entry name" value="HhH1"/>
    <property type="match status" value="2"/>
</dbReference>
<dbReference type="SUPFAM" id="SSF46929">
    <property type="entry name" value="DNA helicase RuvA subunit, C-terminal domain"/>
    <property type="match status" value="1"/>
</dbReference>
<dbReference type="SUPFAM" id="SSF50249">
    <property type="entry name" value="Nucleic acid-binding proteins"/>
    <property type="match status" value="1"/>
</dbReference>
<dbReference type="SUPFAM" id="SSF47781">
    <property type="entry name" value="RuvA domain 2-like"/>
    <property type="match status" value="1"/>
</dbReference>
<evidence type="ECO:0000255" key="1">
    <source>
        <dbReference type="HAMAP-Rule" id="MF_00031"/>
    </source>
</evidence>
<sequence>MYEYFKGIISKITAKYIVLEVNSIGYILHVANPYAYSGHLHQEAKVYVHQVVREDAELLYGFATEEEKQLFLSLISVSGIGPVSALAIIAADDNAGLVQAIEQKNITYLTKFPKIGKKTAQQMVLDLEGKVVAADGLAESKAPVQTVDNQELEEAMEAMLALGYKATELKKIKKFFEGTTDTAENYIKSALKMLVK</sequence>
<gene>
    <name evidence="1" type="primary">ruvA</name>
    <name type="ordered locus">SGO_2050</name>
</gene>
<name>RUVA_STRGC</name>
<accession>A8AZT8</accession>
<comment type="function">
    <text evidence="1">The RuvA-RuvB-RuvC complex processes Holliday junction (HJ) DNA during genetic recombination and DNA repair, while the RuvA-RuvB complex plays an important role in the rescue of blocked DNA replication forks via replication fork reversal (RFR). RuvA specifically binds to HJ cruciform DNA, conferring on it an open structure. The RuvB hexamer acts as an ATP-dependent pump, pulling dsDNA into and through the RuvAB complex. HJ branch migration allows RuvC to scan DNA until it finds its consensus sequence, where it cleaves and resolves the cruciform DNA.</text>
</comment>
<comment type="subunit">
    <text evidence="1">Homotetramer. Forms an RuvA(8)-RuvB(12)-Holliday junction (HJ) complex. HJ DNA is sandwiched between 2 RuvA tetramers; dsDNA enters through RuvA and exits via RuvB. An RuvB hexamer assembles on each DNA strand where it exits the tetramer. Each RuvB hexamer is contacted by two RuvA subunits (via domain III) on 2 adjacent RuvB subunits; this complex drives branch migration. In the full resolvosome a probable DNA-RuvA(4)-RuvB(12)-RuvC(2) complex forms which resolves the HJ.</text>
</comment>
<comment type="subcellular location">
    <subcellularLocation>
        <location evidence="1">Cytoplasm</location>
    </subcellularLocation>
</comment>
<comment type="domain">
    <text evidence="1">Has three domains with a flexible linker between the domains II and III and assumes an 'L' shape. Domain III is highly mobile and contacts RuvB.</text>
</comment>
<comment type="similarity">
    <text evidence="1">Belongs to the RuvA family.</text>
</comment>
<protein>
    <recommendedName>
        <fullName evidence="1">Holliday junction branch migration complex subunit RuvA</fullName>
    </recommendedName>
</protein>
<organism>
    <name type="scientific">Streptococcus gordonii (strain Challis / ATCC 35105 / BCRC 15272 / CH1 / DL1 / V288)</name>
    <dbReference type="NCBI Taxonomy" id="467705"/>
    <lineage>
        <taxon>Bacteria</taxon>
        <taxon>Bacillati</taxon>
        <taxon>Bacillota</taxon>
        <taxon>Bacilli</taxon>
        <taxon>Lactobacillales</taxon>
        <taxon>Streptococcaceae</taxon>
        <taxon>Streptococcus</taxon>
    </lineage>
</organism>
<feature type="chain" id="PRO_1000074444" description="Holliday junction branch migration complex subunit RuvA">
    <location>
        <begin position="1"/>
        <end position="196"/>
    </location>
</feature>
<feature type="region of interest" description="Domain I" evidence="1">
    <location>
        <begin position="1"/>
        <end position="63"/>
    </location>
</feature>
<feature type="region of interest" description="Domain II" evidence="1">
    <location>
        <begin position="64"/>
        <end position="142"/>
    </location>
</feature>
<feature type="region of interest" description="Flexible linker" evidence="1">
    <location>
        <begin position="143"/>
        <end position="146"/>
    </location>
</feature>
<feature type="region of interest" description="Domain III" evidence="1">
    <location>
        <begin position="147"/>
        <end position="196"/>
    </location>
</feature>
<keyword id="KW-0963">Cytoplasm</keyword>
<keyword id="KW-0227">DNA damage</keyword>
<keyword id="KW-0233">DNA recombination</keyword>
<keyword id="KW-0234">DNA repair</keyword>
<keyword id="KW-0238">DNA-binding</keyword>
<keyword id="KW-1185">Reference proteome</keyword>